<name>P4H2_ARATH</name>
<dbReference type="EC" id="1.14.11.2" evidence="6"/>
<dbReference type="EMBL" id="AC011623">
    <property type="protein sequence ID" value="AAF08583.1"/>
    <property type="status" value="ALT_SEQ"/>
    <property type="molecule type" value="Genomic_DNA"/>
</dbReference>
<dbReference type="EMBL" id="CP002686">
    <property type="protein sequence ID" value="AEE74370.1"/>
    <property type="molecule type" value="Genomic_DNA"/>
</dbReference>
<dbReference type="EMBL" id="AK229257">
    <property type="protein sequence ID" value="BAF01121.1"/>
    <property type="molecule type" value="mRNA"/>
</dbReference>
<dbReference type="EMBL" id="AY088813">
    <property type="protein sequence ID" value="AAM67123.1"/>
    <property type="status" value="ALT_INIT"/>
    <property type="molecule type" value="mRNA"/>
</dbReference>
<dbReference type="RefSeq" id="NP_566279.1">
    <property type="nucleotide sequence ID" value="NM_111505.4"/>
</dbReference>
<dbReference type="SMR" id="F4JAU3"/>
<dbReference type="FunCoup" id="F4JAU3">
    <property type="interactions" value="363"/>
</dbReference>
<dbReference type="STRING" id="3702.F4JAU3"/>
<dbReference type="GlyCosmos" id="F4JAU3">
    <property type="glycosylation" value="3 sites, No reported glycans"/>
</dbReference>
<dbReference type="GlyGen" id="F4JAU3">
    <property type="glycosylation" value="3 sites"/>
</dbReference>
<dbReference type="PaxDb" id="3702-AT3G06300.1"/>
<dbReference type="ProteomicsDB" id="248882"/>
<dbReference type="EnsemblPlants" id="AT3G06300.1">
    <property type="protein sequence ID" value="AT3G06300.1"/>
    <property type="gene ID" value="AT3G06300"/>
</dbReference>
<dbReference type="GeneID" id="819804"/>
<dbReference type="Gramene" id="AT3G06300.1">
    <property type="protein sequence ID" value="AT3G06300.1"/>
    <property type="gene ID" value="AT3G06300"/>
</dbReference>
<dbReference type="KEGG" id="ath:AT3G06300"/>
<dbReference type="Araport" id="AT3G06300"/>
<dbReference type="TAIR" id="AT3G06300">
    <property type="gene designation" value="P4H2"/>
</dbReference>
<dbReference type="eggNOG" id="KOG1591">
    <property type="taxonomic scope" value="Eukaryota"/>
</dbReference>
<dbReference type="HOGENOM" id="CLU_058132_5_0_1"/>
<dbReference type="InParanoid" id="F4JAU3"/>
<dbReference type="OMA" id="NCEKWAN"/>
<dbReference type="PRO" id="PR:F4JAU3"/>
<dbReference type="Proteomes" id="UP000006548">
    <property type="component" value="Chromosome 3"/>
</dbReference>
<dbReference type="ExpressionAtlas" id="F4JAU3">
    <property type="expression patterns" value="baseline and differential"/>
</dbReference>
<dbReference type="GO" id="GO:0005789">
    <property type="term" value="C:endoplasmic reticulum membrane"/>
    <property type="evidence" value="ECO:0007669"/>
    <property type="project" value="UniProtKB-SubCell"/>
</dbReference>
<dbReference type="GO" id="GO:0005768">
    <property type="term" value="C:endosome"/>
    <property type="evidence" value="ECO:0007005"/>
    <property type="project" value="TAIR"/>
</dbReference>
<dbReference type="GO" id="GO:0005794">
    <property type="term" value="C:Golgi apparatus"/>
    <property type="evidence" value="ECO:0007005"/>
    <property type="project" value="TAIR"/>
</dbReference>
<dbReference type="GO" id="GO:0000137">
    <property type="term" value="C:Golgi cis cisterna"/>
    <property type="evidence" value="ECO:0007005"/>
    <property type="project" value="TAIR"/>
</dbReference>
<dbReference type="GO" id="GO:0000139">
    <property type="term" value="C:Golgi membrane"/>
    <property type="evidence" value="ECO:0007669"/>
    <property type="project" value="UniProtKB-SubCell"/>
</dbReference>
<dbReference type="GO" id="GO:0005802">
    <property type="term" value="C:trans-Golgi network"/>
    <property type="evidence" value="ECO:0007005"/>
    <property type="project" value="TAIR"/>
</dbReference>
<dbReference type="GO" id="GO:0005506">
    <property type="term" value="F:iron ion binding"/>
    <property type="evidence" value="ECO:0007669"/>
    <property type="project" value="InterPro"/>
</dbReference>
<dbReference type="GO" id="GO:0031418">
    <property type="term" value="F:L-ascorbic acid binding"/>
    <property type="evidence" value="ECO:0007669"/>
    <property type="project" value="InterPro"/>
</dbReference>
<dbReference type="GO" id="GO:0004656">
    <property type="term" value="F:procollagen-proline 4-dioxygenase activity"/>
    <property type="evidence" value="ECO:0000314"/>
    <property type="project" value="TAIR"/>
</dbReference>
<dbReference type="GO" id="GO:0018401">
    <property type="term" value="P:peptidyl-proline hydroxylation to 4-hydroxy-L-proline"/>
    <property type="evidence" value="ECO:0000314"/>
    <property type="project" value="TAIR"/>
</dbReference>
<dbReference type="GO" id="GO:0080147">
    <property type="term" value="P:root hair cell development"/>
    <property type="evidence" value="ECO:0000315"/>
    <property type="project" value="TAIR"/>
</dbReference>
<dbReference type="FunFam" id="2.60.120.620:FF:000002">
    <property type="entry name" value="Prolyl 4-hydroxylase 4"/>
    <property type="match status" value="1"/>
</dbReference>
<dbReference type="Gene3D" id="2.60.120.620">
    <property type="entry name" value="q2cbj1_9rhob like domain"/>
    <property type="match status" value="1"/>
</dbReference>
<dbReference type="InterPro" id="IPR005123">
    <property type="entry name" value="Oxoglu/Fe-dep_dioxygenase_dom"/>
</dbReference>
<dbReference type="InterPro" id="IPR045054">
    <property type="entry name" value="P4HA-like"/>
</dbReference>
<dbReference type="InterPro" id="IPR006620">
    <property type="entry name" value="Pro_4_hyd_alph"/>
</dbReference>
<dbReference type="InterPro" id="IPR044862">
    <property type="entry name" value="Pro_4_hyd_alph_FE2OG_OXY"/>
</dbReference>
<dbReference type="InterPro" id="IPR003582">
    <property type="entry name" value="ShKT_dom"/>
</dbReference>
<dbReference type="PANTHER" id="PTHR10869:SF165">
    <property type="entry name" value="PROLYL 4-HYDROXYLASE 2"/>
    <property type="match status" value="1"/>
</dbReference>
<dbReference type="PANTHER" id="PTHR10869">
    <property type="entry name" value="PROLYL 4-HYDROXYLASE ALPHA SUBUNIT"/>
    <property type="match status" value="1"/>
</dbReference>
<dbReference type="Pfam" id="PF13640">
    <property type="entry name" value="2OG-FeII_Oxy_3"/>
    <property type="match status" value="1"/>
</dbReference>
<dbReference type="SMART" id="SM00702">
    <property type="entry name" value="P4Hc"/>
    <property type="match status" value="1"/>
</dbReference>
<dbReference type="PROSITE" id="PS51471">
    <property type="entry name" value="FE2OG_OXY"/>
    <property type="match status" value="1"/>
</dbReference>
<dbReference type="PROSITE" id="PS51670">
    <property type="entry name" value="SHKT"/>
    <property type="match status" value="1"/>
</dbReference>
<protein>
    <recommendedName>
        <fullName evidence="10">Prolyl 4-hydroxylase 2</fullName>
        <shortName evidence="8">AtP4H-2</shortName>
        <shortName evidence="9">AtP4H2</shortName>
        <ecNumber evidence="6">1.14.11.2</ecNumber>
    </recommendedName>
</protein>
<feature type="chain" id="PRO_0000429336" description="Prolyl 4-hydroxylase 2">
    <location>
        <begin position="1"/>
        <end position="299"/>
    </location>
</feature>
<feature type="topological domain" description="Cytoplasmic" evidence="10">
    <location>
        <begin position="1"/>
        <end position="5"/>
    </location>
</feature>
<feature type="transmembrane region" description="Helical; Signal-anchor for type II membrane protein" evidence="2">
    <location>
        <begin position="6"/>
        <end position="26"/>
    </location>
</feature>
<feature type="topological domain" description="Lumenal" evidence="10">
    <location>
        <begin position="27"/>
        <end position="299"/>
    </location>
</feature>
<feature type="domain" description="Fe2OG dioxygenase" evidence="4">
    <location>
        <begin position="121"/>
        <end position="246"/>
    </location>
</feature>
<feature type="domain" description="ShKT" evidence="5">
    <location>
        <begin position="259"/>
        <end position="299"/>
    </location>
</feature>
<feature type="binding site" evidence="4">
    <location>
        <position position="139"/>
    </location>
    <ligand>
        <name>Fe cation</name>
        <dbReference type="ChEBI" id="CHEBI:24875"/>
    </ligand>
</feature>
<feature type="binding site" evidence="4">
    <location>
        <position position="141"/>
    </location>
    <ligand>
        <name>Fe cation</name>
        <dbReference type="ChEBI" id="CHEBI:24875"/>
    </ligand>
</feature>
<feature type="binding site" evidence="4">
    <location>
        <position position="227"/>
    </location>
    <ligand>
        <name>Fe cation</name>
        <dbReference type="ChEBI" id="CHEBI:24875"/>
    </ligand>
</feature>
<feature type="binding site" evidence="4">
    <location>
        <position position="237"/>
    </location>
    <ligand>
        <name>2-oxoglutarate</name>
        <dbReference type="ChEBI" id="CHEBI:16810"/>
    </ligand>
</feature>
<feature type="glycosylation site" description="N-linked (GlcNAc...) asparagine" evidence="3">
    <location>
        <position position="165"/>
    </location>
</feature>
<feature type="glycosylation site" description="N-linked (GlcNAc...) asparagine" evidence="3">
    <location>
        <position position="258"/>
    </location>
</feature>
<feature type="glycosylation site" description="N-linked (GlcNAc...) asparagine" evidence="3">
    <location>
        <position position="263"/>
    </location>
</feature>
<feature type="disulfide bond" evidence="5">
    <location>
        <begin position="259"/>
        <end position="299"/>
    </location>
</feature>
<feature type="disulfide bond" evidence="5">
    <location>
        <begin position="266"/>
        <end position="292"/>
    </location>
</feature>
<feature type="disulfide bond" evidence="5">
    <location>
        <begin position="275"/>
        <end position="296"/>
    </location>
</feature>
<feature type="sequence conflict" description="In Ref. 3; BAF01121." evidence="10" ref="3">
    <original>E</original>
    <variation>G</variation>
    <location>
        <position position="51"/>
    </location>
</feature>
<reference key="1">
    <citation type="journal article" date="2000" name="Nature">
        <title>Sequence and analysis of chromosome 3 of the plant Arabidopsis thaliana.</title>
        <authorList>
            <person name="Salanoubat M."/>
            <person name="Lemcke K."/>
            <person name="Rieger M."/>
            <person name="Ansorge W."/>
            <person name="Unseld M."/>
            <person name="Fartmann B."/>
            <person name="Valle G."/>
            <person name="Bloecker H."/>
            <person name="Perez-Alonso M."/>
            <person name="Obermaier B."/>
            <person name="Delseny M."/>
            <person name="Boutry M."/>
            <person name="Grivell L.A."/>
            <person name="Mache R."/>
            <person name="Puigdomenech P."/>
            <person name="De Simone V."/>
            <person name="Choisne N."/>
            <person name="Artiguenave F."/>
            <person name="Robert C."/>
            <person name="Brottier P."/>
            <person name="Wincker P."/>
            <person name="Cattolico L."/>
            <person name="Weissenbach J."/>
            <person name="Saurin W."/>
            <person name="Quetier F."/>
            <person name="Schaefer M."/>
            <person name="Mueller-Auer S."/>
            <person name="Gabel C."/>
            <person name="Fuchs M."/>
            <person name="Benes V."/>
            <person name="Wurmbach E."/>
            <person name="Drzonek H."/>
            <person name="Erfle H."/>
            <person name="Jordan N."/>
            <person name="Bangert S."/>
            <person name="Wiedelmann R."/>
            <person name="Kranz H."/>
            <person name="Voss H."/>
            <person name="Holland R."/>
            <person name="Brandt P."/>
            <person name="Nyakatura G."/>
            <person name="Vezzi A."/>
            <person name="D'Angelo M."/>
            <person name="Pallavicini A."/>
            <person name="Toppo S."/>
            <person name="Simionati B."/>
            <person name="Conrad A."/>
            <person name="Hornischer K."/>
            <person name="Kauer G."/>
            <person name="Loehnert T.-H."/>
            <person name="Nordsiek G."/>
            <person name="Reichelt J."/>
            <person name="Scharfe M."/>
            <person name="Schoen O."/>
            <person name="Bargues M."/>
            <person name="Terol J."/>
            <person name="Climent J."/>
            <person name="Navarro P."/>
            <person name="Collado C."/>
            <person name="Perez-Perez A."/>
            <person name="Ottenwaelder B."/>
            <person name="Duchemin D."/>
            <person name="Cooke R."/>
            <person name="Laudie M."/>
            <person name="Berger-Llauro C."/>
            <person name="Purnelle B."/>
            <person name="Masuy D."/>
            <person name="de Haan M."/>
            <person name="Maarse A.C."/>
            <person name="Alcaraz J.-P."/>
            <person name="Cottet A."/>
            <person name="Casacuberta E."/>
            <person name="Monfort A."/>
            <person name="Argiriou A."/>
            <person name="Flores M."/>
            <person name="Liguori R."/>
            <person name="Vitale D."/>
            <person name="Mannhaupt G."/>
            <person name="Haase D."/>
            <person name="Schoof H."/>
            <person name="Rudd S."/>
            <person name="Zaccaria P."/>
            <person name="Mewes H.-W."/>
            <person name="Mayer K.F.X."/>
            <person name="Kaul S."/>
            <person name="Town C.D."/>
            <person name="Koo H.L."/>
            <person name="Tallon L.J."/>
            <person name="Jenkins J."/>
            <person name="Rooney T."/>
            <person name="Rizzo M."/>
            <person name="Walts A."/>
            <person name="Utterback T."/>
            <person name="Fujii C.Y."/>
            <person name="Shea T.P."/>
            <person name="Creasy T.H."/>
            <person name="Haas B."/>
            <person name="Maiti R."/>
            <person name="Wu D."/>
            <person name="Peterson J."/>
            <person name="Van Aken S."/>
            <person name="Pai G."/>
            <person name="Militscher J."/>
            <person name="Sellers P."/>
            <person name="Gill J.E."/>
            <person name="Feldblyum T.V."/>
            <person name="Preuss D."/>
            <person name="Lin X."/>
            <person name="Nierman W.C."/>
            <person name="Salzberg S.L."/>
            <person name="White O."/>
            <person name="Venter J.C."/>
            <person name="Fraser C.M."/>
            <person name="Kaneko T."/>
            <person name="Nakamura Y."/>
            <person name="Sato S."/>
            <person name="Kato T."/>
            <person name="Asamizu E."/>
            <person name="Sasamoto S."/>
            <person name="Kimura T."/>
            <person name="Idesawa K."/>
            <person name="Kawashima K."/>
            <person name="Kishida Y."/>
            <person name="Kiyokawa C."/>
            <person name="Kohara M."/>
            <person name="Matsumoto M."/>
            <person name="Matsuno A."/>
            <person name="Muraki A."/>
            <person name="Nakayama S."/>
            <person name="Nakazaki N."/>
            <person name="Shinpo S."/>
            <person name="Takeuchi C."/>
            <person name="Wada T."/>
            <person name="Watanabe A."/>
            <person name="Yamada M."/>
            <person name="Yasuda M."/>
            <person name="Tabata S."/>
        </authorList>
    </citation>
    <scope>NUCLEOTIDE SEQUENCE [LARGE SCALE GENOMIC DNA]</scope>
    <source>
        <strain>cv. Columbia</strain>
    </source>
</reference>
<reference key="2">
    <citation type="journal article" date="2017" name="Plant J.">
        <title>Araport11: a complete reannotation of the Arabidopsis thaliana reference genome.</title>
        <authorList>
            <person name="Cheng C.Y."/>
            <person name="Krishnakumar V."/>
            <person name="Chan A.P."/>
            <person name="Thibaud-Nissen F."/>
            <person name="Schobel S."/>
            <person name="Town C.D."/>
        </authorList>
    </citation>
    <scope>GENOME REANNOTATION</scope>
    <source>
        <strain>cv. Columbia</strain>
    </source>
</reference>
<reference key="3">
    <citation type="submission" date="2006-07" db="EMBL/GenBank/DDBJ databases">
        <title>Large-scale analysis of RIKEN Arabidopsis full-length (RAFL) cDNAs.</title>
        <authorList>
            <person name="Totoki Y."/>
            <person name="Seki M."/>
            <person name="Ishida J."/>
            <person name="Nakajima M."/>
            <person name="Enju A."/>
            <person name="Kamiya A."/>
            <person name="Narusaka M."/>
            <person name="Shin-i T."/>
            <person name="Nakagawa M."/>
            <person name="Sakamoto N."/>
            <person name="Oishi K."/>
            <person name="Kohara Y."/>
            <person name="Kobayashi M."/>
            <person name="Toyoda A."/>
            <person name="Sakaki Y."/>
            <person name="Sakurai T."/>
            <person name="Iida K."/>
            <person name="Akiyama K."/>
            <person name="Satou M."/>
            <person name="Toyoda T."/>
            <person name="Konagaya A."/>
            <person name="Carninci P."/>
            <person name="Kawai J."/>
            <person name="Hayashizaki Y."/>
            <person name="Shinozaki K."/>
        </authorList>
    </citation>
    <scope>NUCLEOTIDE SEQUENCE [LARGE SCALE MRNA]</scope>
    <source>
        <strain>cv. Columbia</strain>
    </source>
</reference>
<reference key="4">
    <citation type="submission" date="2002-03" db="EMBL/GenBank/DDBJ databases">
        <title>Full-length cDNA from Arabidopsis thaliana.</title>
        <authorList>
            <person name="Brover V.V."/>
            <person name="Troukhan M.E."/>
            <person name="Alexandrov N.A."/>
            <person name="Lu Y.-P."/>
            <person name="Flavell R.B."/>
            <person name="Feldmann K.A."/>
        </authorList>
    </citation>
    <scope>NUCLEOTIDE SEQUENCE [LARGE SCALE MRNA]</scope>
</reference>
<reference key="5">
    <citation type="journal article" date="2005" name="J. Biol. Chem.">
        <title>Characterization of a second Arabidopsis thaliana prolyl 4-hydroxylase with distinct substrate specificity.</title>
        <authorList>
            <person name="Tiainen P."/>
            <person name="Myllyharju J."/>
            <person name="Koivunen P."/>
        </authorList>
    </citation>
    <scope>PROTEIN SEQUENCE OF 1-11</scope>
    <scope>FUNCTION</scope>
    <scope>CATALYTIC ACTIVITY</scope>
    <scope>BIOPHYSICOCHEMICAL PROPERTIES</scope>
</reference>
<reference key="6">
    <citation type="journal article" date="2007" name="Physiol. Plantarum">
        <title>Arabidopsis prolyl 4-hydroxylases are differentially expressed in response to hypoxia, anoxia and mechanical wounding.</title>
        <authorList>
            <person name="Vlad F."/>
            <person name="Spano T."/>
            <person name="Vlad D."/>
            <person name="Bou Daher F."/>
            <person name="Ouelhadj A."/>
            <person name="Kalaitzis P."/>
        </authorList>
    </citation>
    <scope>GENE FAMILY</scope>
    <scope>NOMENCLATURE</scope>
</reference>
<reference key="7">
    <citation type="journal article" date="2011" name="Science">
        <title>O-glycosylated cell wall proteins are essential in root hair growth.</title>
        <authorList>
            <person name="Velasquez S.M."/>
            <person name="Ricardi M.M."/>
            <person name="Dorosz J.G."/>
            <person name="Fernandez P.V."/>
            <person name="Nadra A.D."/>
            <person name="Pol-Fachin L."/>
            <person name="Egelund J."/>
            <person name="Gille S."/>
            <person name="Harholt J."/>
            <person name="Ciancia M."/>
            <person name="Verli H."/>
            <person name="Pauly M."/>
            <person name="Bacic A."/>
            <person name="Olsen C.E."/>
            <person name="Ulvskov P."/>
            <person name="Petersen B.L."/>
            <person name="Somerville C."/>
            <person name="Iusem N.D."/>
            <person name="Estevez J.M."/>
        </authorList>
    </citation>
    <scope>FUNCTION</scope>
    <scope>SUBCELLULAR LOCATION</scope>
    <scope>TISSUE SPECIFICITY</scope>
    <scope>DISRUPTION PHENOTYPE</scope>
</reference>
<accession>F4JAU3</accession>
<accession>Q0WP28</accession>
<accession>Q8L8T9</accession>
<accession>Q9SQT3</accession>
<organism>
    <name type="scientific">Arabidopsis thaliana</name>
    <name type="common">Mouse-ear cress</name>
    <dbReference type="NCBI Taxonomy" id="3702"/>
    <lineage>
        <taxon>Eukaryota</taxon>
        <taxon>Viridiplantae</taxon>
        <taxon>Streptophyta</taxon>
        <taxon>Embryophyta</taxon>
        <taxon>Tracheophyta</taxon>
        <taxon>Spermatophyta</taxon>
        <taxon>Magnoliopsida</taxon>
        <taxon>eudicotyledons</taxon>
        <taxon>Gunneridae</taxon>
        <taxon>Pentapetalae</taxon>
        <taxon>rosids</taxon>
        <taxon>malvids</taxon>
        <taxon>Brassicales</taxon>
        <taxon>Brassicaceae</taxon>
        <taxon>Camelineae</taxon>
        <taxon>Arabidopsis</taxon>
    </lineage>
</organism>
<evidence type="ECO:0000250" key="1">
    <source>
        <dbReference type="UniProtKB" id="Q86KR9"/>
    </source>
</evidence>
<evidence type="ECO:0000255" key="2"/>
<evidence type="ECO:0000255" key="3">
    <source>
        <dbReference type="PROSITE-ProRule" id="PRU00498"/>
    </source>
</evidence>
<evidence type="ECO:0000255" key="4">
    <source>
        <dbReference type="PROSITE-ProRule" id="PRU00805"/>
    </source>
</evidence>
<evidence type="ECO:0000255" key="5">
    <source>
        <dbReference type="PROSITE-ProRule" id="PRU01005"/>
    </source>
</evidence>
<evidence type="ECO:0000269" key="6">
    <source>
    </source>
</evidence>
<evidence type="ECO:0000269" key="7">
    <source>
    </source>
</evidence>
<evidence type="ECO:0000303" key="8">
    <source>
    </source>
</evidence>
<evidence type="ECO:0000303" key="9">
    <source ref="6"/>
</evidence>
<evidence type="ECO:0000305" key="10"/>
<evidence type="ECO:0000305" key="11">
    <source>
    </source>
</evidence>
<proteinExistence type="evidence at protein level"/>
<comment type="function">
    <text evidence="6 7">Catalyzes the post-translational formation of 4-hydroxyproline in -Xaa-Pro-Gly- sequences in proline-rich peptide sequences of plant glycoproteins and other proteins. Hydroxyprolines are important constituent of many plant cell wall glycoproteins such as extensins, hydroxyproline-rich glycoproteins, lectins and arabinogalactan proteins. Possesses high affinity for leucine-rich repeat and proline-rich extensins of root cell walls that are essential for root hair development. Hydroxyprolines define the subsequent O-glycosylation sites by arabinosyltransferases which elongate the O-arabinosides on extensins. Has low affinity for the substrates tested in vitro.</text>
</comment>
<comment type="catalytic activity">
    <reaction evidence="6">
        <text>L-prolyl-[collagen] + 2-oxoglutarate + O2 = trans-4-hydroxy-L-prolyl-[collagen] + succinate + CO2</text>
        <dbReference type="Rhea" id="RHEA:18945"/>
        <dbReference type="Rhea" id="RHEA-COMP:11676"/>
        <dbReference type="Rhea" id="RHEA-COMP:11680"/>
        <dbReference type="ChEBI" id="CHEBI:15379"/>
        <dbReference type="ChEBI" id="CHEBI:16526"/>
        <dbReference type="ChEBI" id="CHEBI:16810"/>
        <dbReference type="ChEBI" id="CHEBI:30031"/>
        <dbReference type="ChEBI" id="CHEBI:50342"/>
        <dbReference type="ChEBI" id="CHEBI:61965"/>
        <dbReference type="EC" id="1.14.11.2"/>
    </reaction>
</comment>
<comment type="cofactor">
    <cofactor evidence="4">
        <name>Fe(2+)</name>
        <dbReference type="ChEBI" id="CHEBI:29033"/>
    </cofactor>
    <text evidence="4">Binds 1 Fe(2+) ion per subunit.</text>
</comment>
<comment type="cofactor">
    <cofactor evidence="1">
        <name>L-ascorbate</name>
        <dbReference type="ChEBI" id="CHEBI:38290"/>
    </cofactor>
</comment>
<comment type="biophysicochemical properties">
    <kinetics>
        <KM evidence="6">170 uM for 2-oxoglutarate</KM>
        <KM evidence="6">30 uM for poly(L-proline) polypeptides of 5-10 kDa</KM>
        <KM evidence="6">1260 uM for (Ala-Thr-Pro-Pro-Pro-Val)3 peptide present in arabinogalactan protein</KM>
        <KM evidence="6">660 uM for Ser-Pro-Pro-Pro-Pro-Val-Ser-Pro-Pro-Pro-Val-Ser-Pro-Pro-Pro-Pro-Val peptide present in extensin protein</KM>
        <KM evidence="6">380 uM for Ser-Pro-Pro-Pro-Val-Tyr-Lys-Ser-Pro-Pro-Pro-Pro-Val-Lys-His-Tyr-Ser-Pro-Pro-Pro-Val peptide present in extensin protein</KM>
        <KM evidence="6">2800 uM for (Pro-Pro-Gly)10</KM>
    </kinetics>
</comment>
<comment type="subcellular location">
    <subcellularLocation>
        <location evidence="11">Endoplasmic reticulum membrane</location>
        <topology evidence="11">Single-pass type II membrane protein</topology>
    </subcellularLocation>
    <subcellularLocation>
        <location evidence="11">Golgi apparatus membrane</location>
        <topology evidence="11">Single-pass type II membrane protein</topology>
    </subcellularLocation>
    <text evidence="7">Predominantly localized in the endoplasmic reticulum.</text>
</comment>
<comment type="tissue specificity">
    <text evidence="7">Expressed in epidermal root hair cells (trichoblasts).</text>
</comment>
<comment type="disruption phenotype">
    <text evidence="7">Reduced root hair length and content of hydroxyproline in root cell walls.</text>
</comment>
<comment type="similarity">
    <text evidence="10">Belongs to the P4HA family.</text>
</comment>
<comment type="sequence caution" evidence="10">
    <conflict type="erroneous gene model prediction">
        <sequence resource="EMBL-CDS" id="AAF08583"/>
    </conflict>
</comment>
<comment type="sequence caution" evidence="10">
    <conflict type="erroneous initiation">
        <sequence resource="EMBL-CDS" id="AAM67123"/>
    </conflict>
    <text>Truncated N-terminus.</text>
</comment>
<keyword id="KW-0223">Dioxygenase</keyword>
<keyword id="KW-0903">Direct protein sequencing</keyword>
<keyword id="KW-1015">Disulfide bond</keyword>
<keyword id="KW-0256">Endoplasmic reticulum</keyword>
<keyword id="KW-0325">Glycoprotein</keyword>
<keyword id="KW-0333">Golgi apparatus</keyword>
<keyword id="KW-0408">Iron</keyword>
<keyword id="KW-0472">Membrane</keyword>
<keyword id="KW-0479">Metal-binding</keyword>
<keyword id="KW-0560">Oxidoreductase</keyword>
<keyword id="KW-1185">Reference proteome</keyword>
<keyword id="KW-0735">Signal-anchor</keyword>
<keyword id="KW-0812">Transmembrane</keyword>
<keyword id="KW-1133">Transmembrane helix</keyword>
<gene>
    <name evidence="9" type="primary">P4H2</name>
    <name type="ordered locus">At3g06300</name>
    <name type="ORF">F24P17.24</name>
</gene>
<sequence>MSMSRLGLLLFVAILLVLLQSSTCLISSPSSIINPSKVKQVSSKPRAFVYEGFLTDLECDHLISLAKENLQRSAVADNDNGESQVSDVRTSSGTFISKGKDPIVSGIEDKLSTWTFLPKENGEDLQVLRYEHGQKYDAHFDYFHDKVNIARGGHRIATVLLYLSNVTKGGETVFPDAQEFSRRSLSENKDDLSDCAKKGIAVKPKKGNALLFFNLQQDAIPDPFSLHGGCPVIEGEKWSATKWIHVDSFDKILTHDGNCTDVNESCERWAVLGECGKNPEYMVGTPEIPGNCRRSCKAC</sequence>